<sequence>MTELLADEVFKDRVRIFQEYLEHDTDDANVTLYQEAILRMLNMGQRRLIVNIDELRDYNRELADGVLLKPLEYVEPFDEALRNVVSTLIDPVVHKDLKDKLFYVGFRGSFGDHHVNPRTLRAMHLNKMISLEGIVTRCSFVRPKVIKSVHYCEATKRHHFKQYADATMNGGLSFQSTVYPTQDENGNPLSIEFGFSTFRDHQSISLQEMPERAPPGQLPRSIDILLDDDLVDTVKPGDRVNIVGQYRSMGSKTSGNTSATFRTVLLANNVVLLGNKPGLGNVGGGALDITDADIRNINKLARKKNVFELLSTSLAPSIYGYEYVKQAILLLLLGGTEKNLTNGTHIRGDINILMVGDPSTAKSQLLRFVLNTAPLAIATTGRGSSGVGLTAAVTTDKETGERRLEAGAMVLADRGVVCIDEFDKMSDIDRVAIHEVMEQQTVTIAKAGIHTSLNARCSVIAAANPIYGQYDIRKDPHQNIALPDSMLSRFDLLFIVTDDIDDKKDRALSEHVLRMHRYLPPGVEPGTPVRDSLNSVLNVGATNAAGVSTENVEQEVETPVWETFSSLLHANARTKKKELLNINFVRKYIQYAKSRIHPILNQATAEYITNIYCGLRNDDLQGNQRRTSPLTARTLETLIRLSTAHAKARLSSVVEVKDAKAAEKILRYALFREVVKPKRKKHKKQRLEAGEEFDSEDDNSDDMDIEESEEEMDTNMVIDSGSRRVTRSQNATSQSQESGSEIGSSIAGTAGSYNVGTSNTQLSWPSTHSTLPATSRELASSDRNINTGTSVASEVSASVSEQSTVSLPREKMSVFMARLASLTKSELFSEECASLEDVLESINNIEDDVGFSREEAIVALKEMDAQNKIMFSDNVVYRI</sequence>
<name>MCM3_SCHPO</name>
<feature type="chain" id="PRO_0000194100" description="DNA replication licensing factor mcm3">
    <location>
        <begin position="1"/>
        <end position="879"/>
    </location>
</feature>
<feature type="domain" description="MCM">
    <location>
        <begin position="306"/>
        <end position="513"/>
    </location>
</feature>
<feature type="region of interest" description="Disordered" evidence="3">
    <location>
        <begin position="679"/>
        <end position="778"/>
    </location>
</feature>
<feature type="short sequence motif" description="Arginine finger">
    <location>
        <begin position="488"/>
        <end position="491"/>
    </location>
</feature>
<feature type="compositionally biased region" description="Acidic residues" evidence="3">
    <location>
        <begin position="690"/>
        <end position="713"/>
    </location>
</feature>
<feature type="compositionally biased region" description="Low complexity" evidence="3">
    <location>
        <begin position="732"/>
        <end position="752"/>
    </location>
</feature>
<feature type="compositionally biased region" description="Polar residues" evidence="3">
    <location>
        <begin position="754"/>
        <end position="778"/>
    </location>
</feature>
<feature type="binding site" evidence="2">
    <location>
        <begin position="356"/>
        <end position="363"/>
    </location>
    <ligand>
        <name>ATP</name>
        <dbReference type="ChEBI" id="CHEBI:30616"/>
    </ligand>
</feature>
<proteinExistence type="evidence at protein level"/>
<evidence type="ECO:0000250" key="1"/>
<evidence type="ECO:0000255" key="2"/>
<evidence type="ECO:0000256" key="3">
    <source>
        <dbReference type="SAM" id="MobiDB-lite"/>
    </source>
</evidence>
<evidence type="ECO:0000269" key="4">
    <source>
    </source>
</evidence>
<evidence type="ECO:0000305" key="5"/>
<gene>
    <name type="primary">mcm3</name>
    <name type="ORF">SPCC1682.02c</name>
</gene>
<accession>P30666</accession>
<protein>
    <recommendedName>
        <fullName>DNA replication licensing factor mcm3</fullName>
        <ecNumber>3.6.4.12</ecNumber>
    </recommendedName>
    <alternativeName>
        <fullName>Minichromosome maintenance protein 3</fullName>
    </alternativeName>
</protein>
<dbReference type="EC" id="3.6.4.12"/>
<dbReference type="EMBL" id="AF063864">
    <property type="protein sequence ID" value="AAC32263.1"/>
    <property type="molecule type" value="Genomic_DNA"/>
</dbReference>
<dbReference type="EMBL" id="CU329672">
    <property type="protein sequence ID" value="CAA20668.1"/>
    <property type="molecule type" value="Genomic_DNA"/>
</dbReference>
<dbReference type="EMBL" id="Z15034">
    <property type="protein sequence ID" value="CAA78752.1"/>
    <property type="molecule type" value="Genomic_DNA"/>
</dbReference>
<dbReference type="PIR" id="S26642">
    <property type="entry name" value="S26642"/>
</dbReference>
<dbReference type="PIR" id="T41059">
    <property type="entry name" value="T41059"/>
</dbReference>
<dbReference type="RefSeq" id="NP_587795.1">
    <property type="nucleotide sequence ID" value="NM_001022788.2"/>
</dbReference>
<dbReference type="SMR" id="P30666"/>
<dbReference type="BioGRID" id="275419">
    <property type="interactions" value="11"/>
</dbReference>
<dbReference type="ComplexPortal" id="CPX-2945">
    <property type="entry name" value="MCM complex"/>
</dbReference>
<dbReference type="FunCoup" id="P30666">
    <property type="interactions" value="743"/>
</dbReference>
<dbReference type="IntAct" id="P30666">
    <property type="interactions" value="4"/>
</dbReference>
<dbReference type="MINT" id="P30666"/>
<dbReference type="STRING" id="284812.P30666"/>
<dbReference type="iPTMnet" id="P30666"/>
<dbReference type="SwissPalm" id="P30666"/>
<dbReference type="PaxDb" id="4896-SPCC1682.02c.1"/>
<dbReference type="EnsemblFungi" id="SPCC1682.02c.1">
    <property type="protein sequence ID" value="SPCC1682.02c.1:pep"/>
    <property type="gene ID" value="SPCC1682.02c"/>
</dbReference>
<dbReference type="GeneID" id="2538838"/>
<dbReference type="KEGG" id="spo:2538838"/>
<dbReference type="PomBase" id="SPCC1682.02c">
    <property type="gene designation" value="mcm3"/>
</dbReference>
<dbReference type="VEuPathDB" id="FungiDB:SPCC1682.02c"/>
<dbReference type="eggNOG" id="KOG0479">
    <property type="taxonomic scope" value="Eukaryota"/>
</dbReference>
<dbReference type="HOGENOM" id="CLU_000995_6_0_1"/>
<dbReference type="InParanoid" id="P30666"/>
<dbReference type="OMA" id="NVYPQED"/>
<dbReference type="PhylomeDB" id="P30666"/>
<dbReference type="Reactome" id="R-SPO-176187">
    <property type="pathway name" value="Activation of ATR in response to replication stress"/>
</dbReference>
<dbReference type="Reactome" id="R-SPO-68867">
    <property type="pathway name" value="Assembly of the pre-replicative complex"/>
</dbReference>
<dbReference type="Reactome" id="R-SPO-68949">
    <property type="pathway name" value="Orc1 removal from chromatin"/>
</dbReference>
<dbReference type="Reactome" id="R-SPO-68962">
    <property type="pathway name" value="Activation of the pre-replicative complex"/>
</dbReference>
<dbReference type="Reactome" id="R-SPO-69052">
    <property type="pathway name" value="Switching of origins to a post-replicative state"/>
</dbReference>
<dbReference type="PRO" id="PR:P30666"/>
<dbReference type="Proteomes" id="UP000002485">
    <property type="component" value="Chromosome III"/>
</dbReference>
<dbReference type="GO" id="GO:0000785">
    <property type="term" value="C:chromatin"/>
    <property type="evidence" value="ECO:0000314"/>
    <property type="project" value="PomBase"/>
</dbReference>
<dbReference type="GO" id="GO:0005829">
    <property type="term" value="C:cytosol"/>
    <property type="evidence" value="ECO:0007005"/>
    <property type="project" value="PomBase"/>
</dbReference>
<dbReference type="GO" id="GO:0031261">
    <property type="term" value="C:DNA replication preinitiation complex"/>
    <property type="evidence" value="ECO:0000305"/>
    <property type="project" value="PomBase"/>
</dbReference>
<dbReference type="GO" id="GO:0042555">
    <property type="term" value="C:MCM complex"/>
    <property type="evidence" value="ECO:0000314"/>
    <property type="project" value="PomBase"/>
</dbReference>
<dbReference type="GO" id="GO:0005656">
    <property type="term" value="C:nuclear pre-replicative complex"/>
    <property type="evidence" value="ECO:0000305"/>
    <property type="project" value="PomBase"/>
</dbReference>
<dbReference type="GO" id="GO:0043596">
    <property type="term" value="C:nuclear replication fork"/>
    <property type="evidence" value="ECO:0000305"/>
    <property type="project" value="PomBase"/>
</dbReference>
<dbReference type="GO" id="GO:0005634">
    <property type="term" value="C:nucleus"/>
    <property type="evidence" value="ECO:0000314"/>
    <property type="project" value="PomBase"/>
</dbReference>
<dbReference type="GO" id="GO:0005524">
    <property type="term" value="F:ATP binding"/>
    <property type="evidence" value="ECO:0007669"/>
    <property type="project" value="UniProtKB-KW"/>
</dbReference>
<dbReference type="GO" id="GO:0016887">
    <property type="term" value="F:ATP hydrolysis activity"/>
    <property type="evidence" value="ECO:0007669"/>
    <property type="project" value="InterPro"/>
</dbReference>
<dbReference type="GO" id="GO:0003688">
    <property type="term" value="F:DNA replication origin binding"/>
    <property type="evidence" value="ECO:0000266"/>
    <property type="project" value="PomBase"/>
</dbReference>
<dbReference type="GO" id="GO:0004386">
    <property type="term" value="F:helicase activity"/>
    <property type="evidence" value="ECO:0007669"/>
    <property type="project" value="UniProtKB-KW"/>
</dbReference>
<dbReference type="GO" id="GO:0003697">
    <property type="term" value="F:single-stranded DNA binding"/>
    <property type="evidence" value="ECO:0000318"/>
    <property type="project" value="GO_Central"/>
</dbReference>
<dbReference type="GO" id="GO:0006271">
    <property type="term" value="P:DNA strand elongation involved in DNA replication"/>
    <property type="evidence" value="ECO:0000318"/>
    <property type="project" value="GO_Central"/>
</dbReference>
<dbReference type="GO" id="GO:0000727">
    <property type="term" value="P:double-strand break repair via break-induced replication"/>
    <property type="evidence" value="ECO:0000318"/>
    <property type="project" value="GO_Central"/>
</dbReference>
<dbReference type="GO" id="GO:1902975">
    <property type="term" value="P:mitotic DNA replication initiation"/>
    <property type="evidence" value="ECO:0000269"/>
    <property type="project" value="PomBase"/>
</dbReference>
<dbReference type="GO" id="GO:0006279">
    <property type="term" value="P:premeiotic DNA replication"/>
    <property type="evidence" value="ECO:0000314"/>
    <property type="project" value="ComplexPortal"/>
</dbReference>
<dbReference type="CDD" id="cd17754">
    <property type="entry name" value="MCM3"/>
    <property type="match status" value="1"/>
</dbReference>
<dbReference type="FunFam" id="2.20.28.10:FF:000008">
    <property type="entry name" value="DNA helicase"/>
    <property type="match status" value="1"/>
</dbReference>
<dbReference type="Gene3D" id="2.20.28.10">
    <property type="match status" value="1"/>
</dbReference>
<dbReference type="Gene3D" id="3.30.1640.10">
    <property type="entry name" value="mini-chromosome maintenance (MCM) complex, chain A, domain 1"/>
    <property type="match status" value="1"/>
</dbReference>
<dbReference type="Gene3D" id="2.40.50.140">
    <property type="entry name" value="Nucleic acid-binding proteins"/>
    <property type="match status" value="1"/>
</dbReference>
<dbReference type="Gene3D" id="3.40.50.300">
    <property type="entry name" value="P-loop containing nucleotide triphosphate hydrolases"/>
    <property type="match status" value="1"/>
</dbReference>
<dbReference type="InterPro" id="IPR003593">
    <property type="entry name" value="AAA+_ATPase"/>
</dbReference>
<dbReference type="InterPro" id="IPR031327">
    <property type="entry name" value="MCM"/>
</dbReference>
<dbReference type="InterPro" id="IPR008046">
    <property type="entry name" value="Mcm3"/>
</dbReference>
<dbReference type="InterPro" id="IPR018525">
    <property type="entry name" value="MCM_CS"/>
</dbReference>
<dbReference type="InterPro" id="IPR001208">
    <property type="entry name" value="MCM_dom"/>
</dbReference>
<dbReference type="InterPro" id="IPR041562">
    <property type="entry name" value="MCM_lid"/>
</dbReference>
<dbReference type="InterPro" id="IPR027925">
    <property type="entry name" value="MCM_N"/>
</dbReference>
<dbReference type="InterPro" id="IPR033762">
    <property type="entry name" value="MCM_OB"/>
</dbReference>
<dbReference type="InterPro" id="IPR012340">
    <property type="entry name" value="NA-bd_OB-fold"/>
</dbReference>
<dbReference type="InterPro" id="IPR027417">
    <property type="entry name" value="P-loop_NTPase"/>
</dbReference>
<dbReference type="InterPro" id="IPR056575">
    <property type="entry name" value="WH_MCM3_C"/>
</dbReference>
<dbReference type="PANTHER" id="PTHR11630">
    <property type="entry name" value="DNA REPLICATION LICENSING FACTOR MCM FAMILY MEMBER"/>
    <property type="match status" value="1"/>
</dbReference>
<dbReference type="PANTHER" id="PTHR11630:SF46">
    <property type="entry name" value="DNA REPLICATION LICENSING FACTOR MCM3-RELATED"/>
    <property type="match status" value="1"/>
</dbReference>
<dbReference type="Pfam" id="PF00493">
    <property type="entry name" value="MCM"/>
    <property type="match status" value="1"/>
</dbReference>
<dbReference type="Pfam" id="PF17855">
    <property type="entry name" value="MCM_lid"/>
    <property type="match status" value="1"/>
</dbReference>
<dbReference type="Pfam" id="PF14551">
    <property type="entry name" value="MCM_N"/>
    <property type="match status" value="1"/>
</dbReference>
<dbReference type="Pfam" id="PF17207">
    <property type="entry name" value="MCM_OB"/>
    <property type="match status" value="1"/>
</dbReference>
<dbReference type="Pfam" id="PF23191">
    <property type="entry name" value="WH_MCM3_C"/>
    <property type="match status" value="1"/>
</dbReference>
<dbReference type="PRINTS" id="PR01657">
    <property type="entry name" value="MCMFAMILY"/>
</dbReference>
<dbReference type="PRINTS" id="PR01659">
    <property type="entry name" value="MCMPROTEIN3"/>
</dbReference>
<dbReference type="SMART" id="SM00382">
    <property type="entry name" value="AAA"/>
    <property type="match status" value="1"/>
</dbReference>
<dbReference type="SMART" id="SM00350">
    <property type="entry name" value="MCM"/>
    <property type="match status" value="1"/>
</dbReference>
<dbReference type="SUPFAM" id="SSF50249">
    <property type="entry name" value="Nucleic acid-binding proteins"/>
    <property type="match status" value="1"/>
</dbReference>
<dbReference type="SUPFAM" id="SSF52540">
    <property type="entry name" value="P-loop containing nucleoside triphosphate hydrolases"/>
    <property type="match status" value="1"/>
</dbReference>
<dbReference type="PROSITE" id="PS00847">
    <property type="entry name" value="MCM_1"/>
    <property type="match status" value="1"/>
</dbReference>
<dbReference type="PROSITE" id="PS50051">
    <property type="entry name" value="MCM_2"/>
    <property type="match status" value="1"/>
</dbReference>
<reference key="1">
    <citation type="journal article" date="1998" name="Nucleic Acids Res.">
        <title>Schizosaccharomyces pombe Mcm3p, an essential nuclear protein, associates tightly with Nda4p (Mcm5p).</title>
        <authorList>
            <person name="Sherman D.A."/>
            <person name="Forsburg S.L."/>
        </authorList>
    </citation>
    <scope>NUCLEOTIDE SEQUENCE [GENOMIC DNA]</scope>
    <source>
        <strain>SP011</strain>
    </source>
</reference>
<reference key="2">
    <citation type="journal article" date="2002" name="Nature">
        <title>The genome sequence of Schizosaccharomyces pombe.</title>
        <authorList>
            <person name="Wood V."/>
            <person name="Gwilliam R."/>
            <person name="Rajandream M.A."/>
            <person name="Lyne M.H."/>
            <person name="Lyne R."/>
            <person name="Stewart A."/>
            <person name="Sgouros J.G."/>
            <person name="Peat N."/>
            <person name="Hayles J."/>
            <person name="Baker S.G."/>
            <person name="Basham D."/>
            <person name="Bowman S."/>
            <person name="Brooks K."/>
            <person name="Brown D."/>
            <person name="Brown S."/>
            <person name="Chillingworth T."/>
            <person name="Churcher C.M."/>
            <person name="Collins M."/>
            <person name="Connor R."/>
            <person name="Cronin A."/>
            <person name="Davis P."/>
            <person name="Feltwell T."/>
            <person name="Fraser A."/>
            <person name="Gentles S."/>
            <person name="Goble A."/>
            <person name="Hamlin N."/>
            <person name="Harris D.E."/>
            <person name="Hidalgo J."/>
            <person name="Hodgson G."/>
            <person name="Holroyd S."/>
            <person name="Hornsby T."/>
            <person name="Howarth S."/>
            <person name="Huckle E.J."/>
            <person name="Hunt S."/>
            <person name="Jagels K."/>
            <person name="James K.D."/>
            <person name="Jones L."/>
            <person name="Jones M."/>
            <person name="Leather S."/>
            <person name="McDonald S."/>
            <person name="McLean J."/>
            <person name="Mooney P."/>
            <person name="Moule S."/>
            <person name="Mungall K.L."/>
            <person name="Murphy L.D."/>
            <person name="Niblett D."/>
            <person name="Odell C."/>
            <person name="Oliver K."/>
            <person name="O'Neil S."/>
            <person name="Pearson D."/>
            <person name="Quail M.A."/>
            <person name="Rabbinowitsch E."/>
            <person name="Rutherford K.M."/>
            <person name="Rutter S."/>
            <person name="Saunders D."/>
            <person name="Seeger K."/>
            <person name="Sharp S."/>
            <person name="Skelton J."/>
            <person name="Simmonds M.N."/>
            <person name="Squares R."/>
            <person name="Squares S."/>
            <person name="Stevens K."/>
            <person name="Taylor K."/>
            <person name="Taylor R.G."/>
            <person name="Tivey A."/>
            <person name="Walsh S.V."/>
            <person name="Warren T."/>
            <person name="Whitehead S."/>
            <person name="Woodward J.R."/>
            <person name="Volckaert G."/>
            <person name="Aert R."/>
            <person name="Robben J."/>
            <person name="Grymonprez B."/>
            <person name="Weltjens I."/>
            <person name="Vanstreels E."/>
            <person name="Rieger M."/>
            <person name="Schaefer M."/>
            <person name="Mueller-Auer S."/>
            <person name="Gabel C."/>
            <person name="Fuchs M."/>
            <person name="Duesterhoeft A."/>
            <person name="Fritzc C."/>
            <person name="Holzer E."/>
            <person name="Moestl D."/>
            <person name="Hilbert H."/>
            <person name="Borzym K."/>
            <person name="Langer I."/>
            <person name="Beck A."/>
            <person name="Lehrach H."/>
            <person name="Reinhardt R."/>
            <person name="Pohl T.M."/>
            <person name="Eger P."/>
            <person name="Zimmermann W."/>
            <person name="Wedler H."/>
            <person name="Wambutt R."/>
            <person name="Purnelle B."/>
            <person name="Goffeau A."/>
            <person name="Cadieu E."/>
            <person name="Dreano S."/>
            <person name="Gloux S."/>
            <person name="Lelaure V."/>
            <person name="Mottier S."/>
            <person name="Galibert F."/>
            <person name="Aves S.J."/>
            <person name="Xiang Z."/>
            <person name="Hunt C."/>
            <person name="Moore K."/>
            <person name="Hurst S.M."/>
            <person name="Lucas M."/>
            <person name="Rochet M."/>
            <person name="Gaillardin C."/>
            <person name="Tallada V.A."/>
            <person name="Garzon A."/>
            <person name="Thode G."/>
            <person name="Daga R.R."/>
            <person name="Cruzado L."/>
            <person name="Jimenez J."/>
            <person name="Sanchez M."/>
            <person name="del Rey F."/>
            <person name="Benito J."/>
            <person name="Dominguez A."/>
            <person name="Revuelta J.L."/>
            <person name="Moreno S."/>
            <person name="Armstrong J."/>
            <person name="Forsburg S.L."/>
            <person name="Cerutti L."/>
            <person name="Lowe T."/>
            <person name="McCombie W.R."/>
            <person name="Paulsen I."/>
            <person name="Potashkin J."/>
            <person name="Shpakovski G.V."/>
            <person name="Ussery D."/>
            <person name="Barrell B.G."/>
            <person name="Nurse P."/>
        </authorList>
    </citation>
    <scope>NUCLEOTIDE SEQUENCE [LARGE SCALE GENOMIC DNA]</scope>
    <source>
        <strain>972 / ATCC 24843</strain>
    </source>
</reference>
<reference key="3">
    <citation type="journal article" date="1992" name="Nucleic Acids Res.">
        <title>Fission yeast cdc21+ belongs to a family of proteins involved in an early step of chromosome replication.</title>
        <authorList>
            <person name="Coxon A."/>
            <person name="Maundrell K."/>
            <person name="Kearsey S.E."/>
        </authorList>
    </citation>
    <scope>NUCLEOTIDE SEQUENCE [GENOMIC DNA] OF 359-434</scope>
</reference>
<reference key="4">
    <citation type="journal article" date="2001" name="Genetics">
        <title>Characterization of Schizosaccharomyces pombe mcm7(+) and cdc23(+) (MCM10) and interactions with replication checkpoints.</title>
        <authorList>
            <person name="Liang D.T."/>
            <person name="Forsburg S.L."/>
        </authorList>
    </citation>
    <scope>SUBUNIT</scope>
    <source>
        <strain>SP011</strain>
    </source>
</reference>
<organism>
    <name type="scientific">Schizosaccharomyces pombe (strain 972 / ATCC 24843)</name>
    <name type="common">Fission yeast</name>
    <dbReference type="NCBI Taxonomy" id="284812"/>
    <lineage>
        <taxon>Eukaryota</taxon>
        <taxon>Fungi</taxon>
        <taxon>Dikarya</taxon>
        <taxon>Ascomycota</taxon>
        <taxon>Taphrinomycotina</taxon>
        <taxon>Schizosaccharomycetes</taxon>
        <taxon>Schizosaccharomycetales</taxon>
        <taxon>Schizosaccharomycetaceae</taxon>
        <taxon>Schizosaccharomyces</taxon>
    </lineage>
</organism>
<keyword id="KW-0067">ATP-binding</keyword>
<keyword id="KW-0235">DNA replication</keyword>
<keyword id="KW-0238">DNA-binding</keyword>
<keyword id="KW-0347">Helicase</keyword>
<keyword id="KW-0378">Hydrolase</keyword>
<keyword id="KW-0547">Nucleotide-binding</keyword>
<keyword id="KW-0539">Nucleus</keyword>
<keyword id="KW-1185">Reference proteome</keyword>
<comment type="function">
    <text evidence="1">Acts as a component of the mcm2-7 complex (mcm complex) which is the putative replicative helicase essential for 'once per cell cycle' DNA replication initiation and elongation in eukaryotic cells. The active ATPase sites in the mcm2-7 ring are formed through the interaction surfaces of two neighboring subunits such that a critical structure of a conserved arginine finger motif is provided in trans relative to the ATP-binding site of the Walker A box of the adjacent subunit. The six ATPase active sites, however, are likely to contribute differentially to the complex helicase activity (By similarity).</text>
</comment>
<comment type="catalytic activity">
    <reaction>
        <text>ATP + H2O = ADP + phosphate + H(+)</text>
        <dbReference type="Rhea" id="RHEA:13065"/>
        <dbReference type="ChEBI" id="CHEBI:15377"/>
        <dbReference type="ChEBI" id="CHEBI:15378"/>
        <dbReference type="ChEBI" id="CHEBI:30616"/>
        <dbReference type="ChEBI" id="CHEBI:43474"/>
        <dbReference type="ChEBI" id="CHEBI:456216"/>
        <dbReference type="EC" id="3.6.4.12"/>
    </reaction>
</comment>
<comment type="subunit">
    <text evidence="4 5">Component of the mcm2-7 complex. The complex forms a toroidal hexameric ring with the proposed subunit order mcm2-mcm6-mcm4-mcm7-mcm3-mcm5 (Probable). The heterodimers of mcm4/mcm6 and mcm3/mcm5 interact with mcm2 and mcm7.</text>
</comment>
<comment type="subcellular location">
    <subcellularLocation>
        <location>Nucleus</location>
    </subcellularLocation>
</comment>
<comment type="similarity">
    <text evidence="5">Belongs to the MCM family.</text>
</comment>